<feature type="chain" id="PRO_1000144887" description="Iron-sulfur cluster insertion protein ErpA">
    <location>
        <begin position="1"/>
        <end position="111"/>
    </location>
</feature>
<feature type="binding site" evidence="1">
    <location>
        <position position="39"/>
    </location>
    <ligand>
        <name>iron-sulfur cluster</name>
        <dbReference type="ChEBI" id="CHEBI:30408"/>
    </ligand>
</feature>
<feature type="binding site" evidence="1">
    <location>
        <position position="103"/>
    </location>
    <ligand>
        <name>iron-sulfur cluster</name>
        <dbReference type="ChEBI" id="CHEBI:30408"/>
    </ligand>
</feature>
<feature type="binding site" evidence="1">
    <location>
        <position position="105"/>
    </location>
    <ligand>
        <name>iron-sulfur cluster</name>
        <dbReference type="ChEBI" id="CHEBI:30408"/>
    </ligand>
</feature>
<evidence type="ECO:0000255" key="1">
    <source>
        <dbReference type="HAMAP-Rule" id="MF_01380"/>
    </source>
</evidence>
<keyword id="KW-0408">Iron</keyword>
<keyword id="KW-0411">Iron-sulfur</keyword>
<keyword id="KW-0479">Metal-binding</keyword>
<proteinExistence type="inferred from homology"/>
<dbReference type="EMBL" id="CP000863">
    <property type="protein sequence ID" value="ACC58974.1"/>
    <property type="molecule type" value="Genomic_DNA"/>
</dbReference>
<dbReference type="RefSeq" id="WP_000993572.1">
    <property type="nucleotide sequence ID" value="NZ_CP031380.1"/>
</dbReference>
<dbReference type="SMR" id="B2I2I7"/>
<dbReference type="GeneID" id="92891930"/>
<dbReference type="KEGG" id="abc:ACICU_03665"/>
<dbReference type="HOGENOM" id="CLU_069054_5_3_6"/>
<dbReference type="Proteomes" id="UP000008839">
    <property type="component" value="Chromosome"/>
</dbReference>
<dbReference type="GO" id="GO:0051537">
    <property type="term" value="F:2 iron, 2 sulfur cluster binding"/>
    <property type="evidence" value="ECO:0007669"/>
    <property type="project" value="TreeGrafter"/>
</dbReference>
<dbReference type="GO" id="GO:0051539">
    <property type="term" value="F:4 iron, 4 sulfur cluster binding"/>
    <property type="evidence" value="ECO:0007669"/>
    <property type="project" value="TreeGrafter"/>
</dbReference>
<dbReference type="GO" id="GO:0005506">
    <property type="term" value="F:iron ion binding"/>
    <property type="evidence" value="ECO:0007669"/>
    <property type="project" value="UniProtKB-UniRule"/>
</dbReference>
<dbReference type="GO" id="GO:0016226">
    <property type="term" value="P:iron-sulfur cluster assembly"/>
    <property type="evidence" value="ECO:0007669"/>
    <property type="project" value="UniProtKB-UniRule"/>
</dbReference>
<dbReference type="FunFam" id="2.60.300.12:FF:000002">
    <property type="entry name" value="Iron-sulfur cluster insertion protein ErpA"/>
    <property type="match status" value="1"/>
</dbReference>
<dbReference type="Gene3D" id="2.60.300.12">
    <property type="entry name" value="HesB-like domain"/>
    <property type="match status" value="1"/>
</dbReference>
<dbReference type="HAMAP" id="MF_01380">
    <property type="entry name" value="Fe_S_insert_ErpA"/>
    <property type="match status" value="1"/>
</dbReference>
<dbReference type="InterPro" id="IPR000361">
    <property type="entry name" value="FeS_biogenesis"/>
</dbReference>
<dbReference type="InterPro" id="IPR016092">
    <property type="entry name" value="FeS_cluster_insertion"/>
</dbReference>
<dbReference type="InterPro" id="IPR017870">
    <property type="entry name" value="FeS_cluster_insertion_CS"/>
</dbReference>
<dbReference type="InterPro" id="IPR023063">
    <property type="entry name" value="FeS_cluster_insertion_RrpA"/>
</dbReference>
<dbReference type="InterPro" id="IPR035903">
    <property type="entry name" value="HesB-like_dom_sf"/>
</dbReference>
<dbReference type="NCBIfam" id="TIGR00049">
    <property type="entry name" value="iron-sulfur cluster assembly accessory protein"/>
    <property type="match status" value="1"/>
</dbReference>
<dbReference type="NCBIfam" id="NF010147">
    <property type="entry name" value="PRK13623.1"/>
    <property type="match status" value="1"/>
</dbReference>
<dbReference type="PANTHER" id="PTHR43011">
    <property type="entry name" value="IRON-SULFUR CLUSTER ASSEMBLY 2 HOMOLOG, MITOCHONDRIAL"/>
    <property type="match status" value="1"/>
</dbReference>
<dbReference type="PANTHER" id="PTHR43011:SF1">
    <property type="entry name" value="IRON-SULFUR CLUSTER ASSEMBLY 2 HOMOLOG, MITOCHONDRIAL"/>
    <property type="match status" value="1"/>
</dbReference>
<dbReference type="Pfam" id="PF01521">
    <property type="entry name" value="Fe-S_biosyn"/>
    <property type="match status" value="1"/>
</dbReference>
<dbReference type="SUPFAM" id="SSF89360">
    <property type="entry name" value="HesB-like domain"/>
    <property type="match status" value="1"/>
</dbReference>
<dbReference type="PROSITE" id="PS01152">
    <property type="entry name" value="HESB"/>
    <property type="match status" value="1"/>
</dbReference>
<reference key="1">
    <citation type="journal article" date="2008" name="Antimicrob. Agents Chemother.">
        <title>Whole-genome pyrosequencing of an epidemic multidrug-resistant Acinetobacter baumannii strain belonging to the European clone II group.</title>
        <authorList>
            <person name="Iacono M."/>
            <person name="Villa L."/>
            <person name="Fortini D."/>
            <person name="Bordoni R."/>
            <person name="Imperi F."/>
            <person name="Bonnal R.J."/>
            <person name="Sicheritz-Ponten T."/>
            <person name="De Bellis G."/>
            <person name="Visca P."/>
            <person name="Cassone A."/>
            <person name="Carattoli A."/>
        </authorList>
    </citation>
    <scope>NUCLEOTIDE SEQUENCE [LARGE SCALE GENOMIC DNA]</scope>
    <source>
        <strain>ACICU</strain>
    </source>
</reference>
<protein>
    <recommendedName>
        <fullName evidence="1">Iron-sulfur cluster insertion protein ErpA</fullName>
    </recommendedName>
</protein>
<comment type="function">
    <text evidence="1">Required for insertion of 4Fe-4S clusters for at least IspG.</text>
</comment>
<comment type="cofactor">
    <cofactor evidence="1">
        <name>iron-sulfur cluster</name>
        <dbReference type="ChEBI" id="CHEBI:30408"/>
    </cofactor>
    <text evidence="1">Binds 1 iron-sulfur cluster per subunit.</text>
</comment>
<comment type="subunit">
    <text evidence="1">Homodimer.</text>
</comment>
<comment type="similarity">
    <text evidence="1">Belongs to the HesB/IscA family.</text>
</comment>
<accession>B2I2I7</accession>
<organism>
    <name type="scientific">Acinetobacter baumannii (strain ACICU)</name>
    <dbReference type="NCBI Taxonomy" id="405416"/>
    <lineage>
        <taxon>Bacteria</taxon>
        <taxon>Pseudomonadati</taxon>
        <taxon>Pseudomonadota</taxon>
        <taxon>Gammaproteobacteria</taxon>
        <taxon>Moraxellales</taxon>
        <taxon>Moraxellaceae</taxon>
        <taxon>Acinetobacter</taxon>
        <taxon>Acinetobacter calcoaceticus/baumannii complex</taxon>
    </lineage>
</organism>
<gene>
    <name evidence="1" type="primary">erpA</name>
    <name type="ordered locus">ACICU_03665</name>
</gene>
<sequence>MNAQALVLTDNAANKVRQLRDSEGNDDLMLRVYVTGGGCSGFSYGFNFAESVNEDDAEFVNGDVKMLVDSLSYQYLVGSVVDYVEGLEGSRFIVQNPNATTTCGCGSSFSI</sequence>
<name>ERPA_ACIBC</name>